<comment type="function">
    <text evidence="1">Photosystem II (PSII) is a light-driven water:plastoquinone oxidoreductase that uses light energy to abstract electrons from H(2)O, generating O(2) and a proton gradient subsequently used for ATP formation. It consists of a core antenna complex that captures photons, and an electron transfer chain that converts photonic excitation into a charge separation. The D1/D2 (PsbA/PsbD) reaction center heterodimer binds P680, the primary electron donor of PSII as well as several subsequent electron acceptors.</text>
</comment>
<comment type="catalytic activity">
    <reaction evidence="1">
        <text>2 a plastoquinone + 4 hnu + 2 H2O = 2 a plastoquinol + O2</text>
        <dbReference type="Rhea" id="RHEA:36359"/>
        <dbReference type="Rhea" id="RHEA-COMP:9561"/>
        <dbReference type="Rhea" id="RHEA-COMP:9562"/>
        <dbReference type="ChEBI" id="CHEBI:15377"/>
        <dbReference type="ChEBI" id="CHEBI:15379"/>
        <dbReference type="ChEBI" id="CHEBI:17757"/>
        <dbReference type="ChEBI" id="CHEBI:30212"/>
        <dbReference type="ChEBI" id="CHEBI:62192"/>
        <dbReference type="EC" id="1.10.3.9"/>
    </reaction>
</comment>
<comment type="cofactor">
    <text evidence="1">The D1/D2 heterodimer binds P680, chlorophylls that are the primary electron donor of PSII, and subsequent electron acceptors. It shares a non-heme iron and each subunit binds pheophytin, quinone, additional chlorophylls, carotenoids and lipids. D1 provides most of the ligands for the Mn4-Ca-O5 cluster of the oxygen-evolving complex (OEC). There is also a Cl(-1) ion associated with D1 and D2, which is required for oxygen evolution. The PSII complex binds additional chlorophylls, carotenoids and specific lipids.</text>
</comment>
<comment type="subunit">
    <text evidence="3">PSII is composed of 1 copy each of membrane proteins PsbA, PsbB, PsbC, PsbD, PsbE, PsbF, PsbH, PsbI, PsbJ, PsbK, PsbL, PsbM, PsbT, PsbX, PsbY, Psb30/Ycf12, peripheral proteins PsbO, CyanoQ (PsbQ), PsbU, PsbV and a large number of cofactors. It forms dimeric complexes.</text>
</comment>
<comment type="subcellular location">
    <subcellularLocation>
        <location evidence="1">Cellular thylakoid membrane</location>
        <topology evidence="1">Multi-pass membrane protein</topology>
    </subcellularLocation>
</comment>
<comment type="induction">
    <text evidence="2">Transcription decreases upon iron starvation.</text>
</comment>
<comment type="PTM">
    <text evidence="1">Tyr-162 forms a radical intermediate that is referred to as redox-active TyrZ, YZ or Y-Z.</text>
</comment>
<comment type="PTM">
    <text evidence="1">C-terminally processed by CtpA; processing is essential to allow assembly of the oxygen-evolving complex and thus photosynthetic growth.</text>
</comment>
<comment type="miscellaneous">
    <text evidence="1">Cyanobacteria usually contain more than 2 copies of the psbA gene.</text>
</comment>
<comment type="miscellaneous">
    <text evidence="1">2 of the reaction center chlorophylls (ChlD1 and ChlD2) are entirely coordinated by water.</text>
</comment>
<comment type="miscellaneous">
    <text evidence="1">Herbicides such as atrazine, BNT, diuron or ioxynil bind in the Q(B) binding site and block subsequent electron transfer.</text>
</comment>
<comment type="similarity">
    <text evidence="1">Belongs to the reaction center PufL/M/PsbA/D family.</text>
</comment>
<evidence type="ECO:0000255" key="1">
    <source>
        <dbReference type="HAMAP-Rule" id="MF_01379"/>
    </source>
</evidence>
<evidence type="ECO:0000269" key="2">
    <source>
    </source>
</evidence>
<evidence type="ECO:0000305" key="3"/>
<accession>P46895</accession>
<reference key="1">
    <citation type="journal article" date="1995" name="Plant Mol. Biol.">
        <title>Characterization of the single psbA gene of Prochlorococcus marinus CCMP 1375 (Prochlorophyta).</title>
        <authorList>
            <person name="Hess W.R."/>
            <person name="Weihe A."/>
            <person name="Loiseaux-De Goer S."/>
            <person name="Partensky F."/>
            <person name="Vaulot D."/>
        </authorList>
    </citation>
    <scope>NUCLEOTIDE SEQUENCE [GENOMIC DNA]</scope>
    <source>
        <strain>SARG / CCMP1375 / SS120</strain>
    </source>
</reference>
<reference key="2">
    <citation type="journal article" date="2003" name="Proc. Natl. Acad. Sci. U.S.A.">
        <title>Genome sequence of the cyanobacterium Prochlorococcus marinus SS120, a nearly minimal oxyphototrophic genome.</title>
        <authorList>
            <person name="Dufresne A."/>
            <person name="Salanoubat M."/>
            <person name="Partensky F."/>
            <person name="Artiguenave F."/>
            <person name="Axmann I.M."/>
            <person name="Barbe V."/>
            <person name="Duprat S."/>
            <person name="Galperin M.Y."/>
            <person name="Koonin E.V."/>
            <person name="Le Gall F."/>
            <person name="Makarova K.S."/>
            <person name="Ostrowski M."/>
            <person name="Oztas S."/>
            <person name="Robert C."/>
            <person name="Rogozin I.B."/>
            <person name="Scanlan D.J."/>
            <person name="Tandeau de Marsac N."/>
            <person name="Weissenbach J."/>
            <person name="Wincker P."/>
            <person name="Wolf Y.I."/>
            <person name="Hess W.R."/>
        </authorList>
    </citation>
    <scope>NUCLEOTIDE SEQUENCE [LARGE SCALE GENOMIC DNA]</scope>
    <source>
        <strain>SARG / CCMP1375 / SS120</strain>
    </source>
</reference>
<reference key="3">
    <citation type="journal article" date="2003" name="Nature">
        <title>Low-light-adapted Prochlorococcus species possess specific antennae for each photosystem.</title>
        <authorList>
            <person name="Bibby T.S."/>
            <person name="Mary I."/>
            <person name="Nield J."/>
            <person name="Partensky F."/>
            <person name="Barber J."/>
        </authorList>
    </citation>
    <scope>REPRESSION UNDER IRON-STARVATION</scope>
    <source>
        <strain>SARG / CCMP1375 / SS120</strain>
    </source>
</reference>
<name>PSBA_PROMA</name>
<proteinExistence type="evidence at transcript level"/>
<protein>
    <recommendedName>
        <fullName evidence="1">Photosystem II protein D1</fullName>
        <shortName evidence="1">PSII D1 protein</shortName>
        <ecNumber evidence="1">1.10.3.9</ecNumber>
    </recommendedName>
    <alternativeName>
        <fullName evidence="1">Photosystem II Q(B) protein</fullName>
    </alternativeName>
</protein>
<organism>
    <name type="scientific">Prochlorococcus marinus (strain SARG / CCMP1375 / SS120)</name>
    <dbReference type="NCBI Taxonomy" id="167539"/>
    <lineage>
        <taxon>Bacteria</taxon>
        <taxon>Bacillati</taxon>
        <taxon>Cyanobacteriota</taxon>
        <taxon>Cyanophyceae</taxon>
        <taxon>Synechococcales</taxon>
        <taxon>Prochlorococcaceae</taxon>
        <taxon>Prochlorococcus</taxon>
    </lineage>
</organism>
<feature type="chain" id="PRO_0000090484" description="Photosystem II protein D1" evidence="1">
    <location>
        <begin position="1"/>
        <end position="345"/>
    </location>
</feature>
<feature type="propeptide" id="PRO_0000316354" evidence="1">
    <location>
        <begin position="346"/>
        <end position="360"/>
    </location>
</feature>
<feature type="transmembrane region" description="Helical" evidence="1">
    <location>
        <begin position="30"/>
        <end position="47"/>
    </location>
</feature>
<feature type="transmembrane region" description="Helical" evidence="1">
    <location>
        <begin position="119"/>
        <end position="134"/>
    </location>
</feature>
<feature type="transmembrane region" description="Helical" evidence="1">
    <location>
        <begin position="143"/>
        <end position="157"/>
    </location>
</feature>
<feature type="transmembrane region" description="Helical" evidence="1">
    <location>
        <begin position="198"/>
        <end position="219"/>
    </location>
</feature>
<feature type="transmembrane region" description="Helical" evidence="1">
    <location>
        <begin position="275"/>
        <end position="289"/>
    </location>
</feature>
<feature type="binding site" description="axial binding residue" evidence="1">
    <location>
        <position position="119"/>
    </location>
    <ligand>
        <name>chlorophyll a</name>
        <dbReference type="ChEBI" id="CHEBI:58416"/>
        <label>ChlzD1</label>
    </ligand>
    <ligandPart>
        <name>Mg</name>
        <dbReference type="ChEBI" id="CHEBI:25107"/>
    </ligandPart>
</feature>
<feature type="binding site" evidence="1">
    <location>
        <position position="127"/>
    </location>
    <ligand>
        <name>pheophytin a</name>
        <dbReference type="ChEBI" id="CHEBI:136840"/>
        <label>D1</label>
    </ligand>
</feature>
<feature type="binding site" evidence="1">
    <location>
        <position position="171"/>
    </location>
    <ligand>
        <name>[CaMn4O5] cluster</name>
        <dbReference type="ChEBI" id="CHEBI:189552"/>
    </ligand>
</feature>
<feature type="binding site" evidence="1">
    <location>
        <position position="190"/>
    </location>
    <ligand>
        <name>[CaMn4O5] cluster</name>
        <dbReference type="ChEBI" id="CHEBI:189552"/>
    </ligand>
</feature>
<feature type="binding site" description="axial binding residue" evidence="1">
    <location>
        <position position="199"/>
    </location>
    <ligand>
        <name>chlorophyll a</name>
        <dbReference type="ChEBI" id="CHEBI:58416"/>
        <label>PD1</label>
    </ligand>
    <ligandPart>
        <name>Mg</name>
        <dbReference type="ChEBI" id="CHEBI:25107"/>
    </ligandPart>
</feature>
<feature type="binding site" evidence="1">
    <location>
        <position position="216"/>
    </location>
    <ligand>
        <name>a quinone</name>
        <dbReference type="ChEBI" id="CHEBI:132124"/>
        <label>B</label>
    </ligand>
</feature>
<feature type="binding site" evidence="1">
    <location>
        <position position="216"/>
    </location>
    <ligand>
        <name>Fe cation</name>
        <dbReference type="ChEBI" id="CHEBI:24875"/>
        <note>ligand shared with heterodimeric partner</note>
    </ligand>
</feature>
<feature type="binding site" evidence="1">
    <location>
        <begin position="265"/>
        <end position="266"/>
    </location>
    <ligand>
        <name>a quinone</name>
        <dbReference type="ChEBI" id="CHEBI:132124"/>
        <label>B</label>
    </ligand>
</feature>
<feature type="binding site" evidence="1">
    <location>
        <position position="273"/>
    </location>
    <ligand>
        <name>Fe cation</name>
        <dbReference type="ChEBI" id="CHEBI:24875"/>
        <note>ligand shared with heterodimeric partner</note>
    </ligand>
</feature>
<feature type="binding site" evidence="1">
    <location>
        <position position="333"/>
    </location>
    <ligand>
        <name>[CaMn4O5] cluster</name>
        <dbReference type="ChEBI" id="CHEBI:189552"/>
    </ligand>
</feature>
<feature type="binding site" evidence="1">
    <location>
        <position position="334"/>
    </location>
    <ligand>
        <name>[CaMn4O5] cluster</name>
        <dbReference type="ChEBI" id="CHEBI:189552"/>
    </ligand>
</feature>
<feature type="binding site" evidence="1">
    <location>
        <position position="343"/>
    </location>
    <ligand>
        <name>[CaMn4O5] cluster</name>
        <dbReference type="ChEBI" id="CHEBI:189552"/>
    </ligand>
</feature>
<feature type="binding site" evidence="1">
    <location>
        <position position="345"/>
    </location>
    <ligand>
        <name>[CaMn4O5] cluster</name>
        <dbReference type="ChEBI" id="CHEBI:189552"/>
    </ligand>
</feature>
<feature type="site" description="Tyrosine radical intermediate" evidence="1">
    <location>
        <position position="162"/>
    </location>
</feature>
<feature type="site" description="Stabilizes free radical intermediate" evidence="1">
    <location>
        <position position="191"/>
    </location>
</feature>
<feature type="site" description="Cleavage; by CtpA" evidence="1">
    <location>
        <begin position="345"/>
        <end position="346"/>
    </location>
</feature>
<feature type="sequence conflict" description="In Ref. 1; CAA89062." evidence="3" ref="1">
    <original>Y</original>
    <variation>N</variation>
    <location>
        <position position="108"/>
    </location>
</feature>
<dbReference type="EC" id="1.10.3.9" evidence="1"/>
<dbReference type="EMBL" id="Z49201">
    <property type="protein sequence ID" value="CAA89062.1"/>
    <property type="molecule type" value="Genomic_DNA"/>
</dbReference>
<dbReference type="EMBL" id="AE017126">
    <property type="protein sequence ID" value="AAP99298.1"/>
    <property type="molecule type" value="Genomic_DNA"/>
</dbReference>
<dbReference type="PIR" id="S54256">
    <property type="entry name" value="S54256"/>
</dbReference>
<dbReference type="RefSeq" id="NP_874646.1">
    <property type="nucleotide sequence ID" value="NC_005042.1"/>
</dbReference>
<dbReference type="RefSeq" id="WP_011124407.1">
    <property type="nucleotide sequence ID" value="NC_005042.1"/>
</dbReference>
<dbReference type="SMR" id="P46895"/>
<dbReference type="STRING" id="167539.Pro_0252"/>
<dbReference type="EnsemblBacteria" id="AAP99298">
    <property type="protein sequence ID" value="AAP99298"/>
    <property type="gene ID" value="Pro_0252"/>
</dbReference>
<dbReference type="KEGG" id="pma:Pro_0252"/>
<dbReference type="PATRIC" id="fig|167539.5.peg.260"/>
<dbReference type="eggNOG" id="ENOG502Z87P">
    <property type="taxonomic scope" value="Bacteria"/>
</dbReference>
<dbReference type="HOGENOM" id="CLU_054206_1_0_3"/>
<dbReference type="OrthoDB" id="505356at2"/>
<dbReference type="Proteomes" id="UP000001420">
    <property type="component" value="Chromosome"/>
</dbReference>
<dbReference type="GO" id="GO:0009523">
    <property type="term" value="C:photosystem II"/>
    <property type="evidence" value="ECO:0007669"/>
    <property type="project" value="UniProtKB-KW"/>
</dbReference>
<dbReference type="GO" id="GO:0031676">
    <property type="term" value="C:plasma membrane-derived thylakoid membrane"/>
    <property type="evidence" value="ECO:0007669"/>
    <property type="project" value="UniProtKB-SubCell"/>
</dbReference>
<dbReference type="GO" id="GO:0016168">
    <property type="term" value="F:chlorophyll binding"/>
    <property type="evidence" value="ECO:0007669"/>
    <property type="project" value="UniProtKB-UniRule"/>
</dbReference>
<dbReference type="GO" id="GO:0045156">
    <property type="term" value="F:electron transporter, transferring electrons within the cyclic electron transport pathway of photosynthesis activity"/>
    <property type="evidence" value="ECO:0007669"/>
    <property type="project" value="InterPro"/>
</dbReference>
<dbReference type="GO" id="GO:0005506">
    <property type="term" value="F:iron ion binding"/>
    <property type="evidence" value="ECO:0007669"/>
    <property type="project" value="UniProtKB-UniRule"/>
</dbReference>
<dbReference type="GO" id="GO:0016682">
    <property type="term" value="F:oxidoreductase activity, acting on diphenols and related substances as donors, oxygen as acceptor"/>
    <property type="evidence" value="ECO:0007669"/>
    <property type="project" value="UniProtKB-UniRule"/>
</dbReference>
<dbReference type="GO" id="GO:0010242">
    <property type="term" value="F:oxygen evolving activity"/>
    <property type="evidence" value="ECO:0007669"/>
    <property type="project" value="UniProtKB-EC"/>
</dbReference>
<dbReference type="GO" id="GO:0009772">
    <property type="term" value="P:photosynthetic electron transport in photosystem II"/>
    <property type="evidence" value="ECO:0007669"/>
    <property type="project" value="InterPro"/>
</dbReference>
<dbReference type="GO" id="GO:0009635">
    <property type="term" value="P:response to herbicide"/>
    <property type="evidence" value="ECO:0007669"/>
    <property type="project" value="UniProtKB-KW"/>
</dbReference>
<dbReference type="FunFam" id="1.20.85.10:FF:000002">
    <property type="entry name" value="Photosystem II protein D1"/>
    <property type="match status" value="1"/>
</dbReference>
<dbReference type="Gene3D" id="1.20.85.10">
    <property type="entry name" value="Photosystem II protein D1-like"/>
    <property type="match status" value="1"/>
</dbReference>
<dbReference type="HAMAP" id="MF_01379">
    <property type="entry name" value="PSII_PsbA_D1"/>
    <property type="match status" value="1"/>
</dbReference>
<dbReference type="InterPro" id="IPR055266">
    <property type="entry name" value="D1/D2"/>
</dbReference>
<dbReference type="InterPro" id="IPR036854">
    <property type="entry name" value="Photo_II_D1/D2_sf"/>
</dbReference>
<dbReference type="InterPro" id="IPR000484">
    <property type="entry name" value="Photo_RC_L/M"/>
</dbReference>
<dbReference type="InterPro" id="IPR055265">
    <property type="entry name" value="Photo_RC_L/M_CS"/>
</dbReference>
<dbReference type="InterPro" id="IPR005867">
    <property type="entry name" value="PSII_D1"/>
</dbReference>
<dbReference type="NCBIfam" id="TIGR01151">
    <property type="entry name" value="psbA"/>
    <property type="match status" value="1"/>
</dbReference>
<dbReference type="PANTHER" id="PTHR33149:SF12">
    <property type="entry name" value="PHOTOSYSTEM II D2 PROTEIN"/>
    <property type="match status" value="1"/>
</dbReference>
<dbReference type="PANTHER" id="PTHR33149">
    <property type="entry name" value="PHOTOSYSTEM II PROTEIN D1"/>
    <property type="match status" value="1"/>
</dbReference>
<dbReference type="Pfam" id="PF00124">
    <property type="entry name" value="Photo_RC"/>
    <property type="match status" value="1"/>
</dbReference>
<dbReference type="PRINTS" id="PR00256">
    <property type="entry name" value="REACTNCENTRE"/>
</dbReference>
<dbReference type="SUPFAM" id="SSF81483">
    <property type="entry name" value="Bacterial photosystem II reaction centre, L and M subunits"/>
    <property type="match status" value="1"/>
</dbReference>
<dbReference type="PROSITE" id="PS00244">
    <property type="entry name" value="REACTION_CENTER"/>
    <property type="match status" value="1"/>
</dbReference>
<keyword id="KW-0106">Calcium</keyword>
<keyword id="KW-0148">Chlorophyll</keyword>
<keyword id="KW-0157">Chromophore</keyword>
<keyword id="KW-0249">Electron transport</keyword>
<keyword id="KW-0359">Herbicide resistance</keyword>
<keyword id="KW-0408">Iron</keyword>
<keyword id="KW-0460">Magnesium</keyword>
<keyword id="KW-0464">Manganese</keyword>
<keyword id="KW-0472">Membrane</keyword>
<keyword id="KW-0479">Metal-binding</keyword>
<keyword id="KW-0560">Oxidoreductase</keyword>
<keyword id="KW-0602">Photosynthesis</keyword>
<keyword id="KW-0604">Photosystem II</keyword>
<keyword id="KW-1185">Reference proteome</keyword>
<keyword id="KW-0793">Thylakoid</keyword>
<keyword id="KW-0812">Transmembrane</keyword>
<keyword id="KW-1133">Transmembrane helix</keyword>
<keyword id="KW-0813">Transport</keyword>
<gene>
    <name evidence="1" type="primary">psbA</name>
    <name type="ordered locus">Pro_0252</name>
</gene>
<sequence>MTTIRQQRSSLLKGWPQFCEWVTSTDNRIYVGWFGVLMIPCLLAAAICFVVAFIAAPPVDIDGIREPVAGSFLYGNNIISGAVVPSSNAIGLHFYPIWEAATLDEWLYNGGPYQLVIFHFLIGICGWMGRQWELSYRLGMRPWICVAYSAPVSAAFAVFLVYPFGQGSFSDGMPLGISGTFNFMFVFQAEHNILMHPFHMAGVAGMFGGSLFSAMHGSLVTSSLIRETTETESQNYGYKFGQEEETYNIVAAHGYFGRLIFQYASFNNSRSLHFFLAIFPVVCVWLTSMGICTMAFNLNGFNFNQSVVDANGKVVPTWGDVLNRANLGMEVMHERNAHNFPLDLAAAESTSVALVAPSIG</sequence>